<organism>
    <name type="scientific">Gallus gallus</name>
    <name type="common">Chicken</name>
    <dbReference type="NCBI Taxonomy" id="9031"/>
    <lineage>
        <taxon>Eukaryota</taxon>
        <taxon>Metazoa</taxon>
        <taxon>Chordata</taxon>
        <taxon>Craniata</taxon>
        <taxon>Vertebrata</taxon>
        <taxon>Euteleostomi</taxon>
        <taxon>Archelosauria</taxon>
        <taxon>Archosauria</taxon>
        <taxon>Dinosauria</taxon>
        <taxon>Saurischia</taxon>
        <taxon>Theropoda</taxon>
        <taxon>Coelurosauria</taxon>
        <taxon>Aves</taxon>
        <taxon>Neognathae</taxon>
        <taxon>Galloanserae</taxon>
        <taxon>Galliformes</taxon>
        <taxon>Phasianidae</taxon>
        <taxon>Phasianinae</taxon>
        <taxon>Gallus</taxon>
    </lineage>
</organism>
<protein>
    <recommendedName>
        <fullName>Nuclear factor 1 B-type</fullName>
        <shortName>NF1-B</shortName>
        <shortName>Nuclear factor 1/B</shortName>
    </recommendedName>
    <alternativeName>
        <fullName>CCAAT-box-binding transcription factor</fullName>
        <shortName>CTF</shortName>
    </alternativeName>
    <alternativeName>
        <fullName>Nuclear factor I/B</fullName>
        <shortName>NF-I/B</shortName>
        <shortName>NFI-B</shortName>
    </alternativeName>
    <alternativeName>
        <fullName>TGGCA-binding protein</fullName>
    </alternativeName>
</protein>
<keyword id="KW-0010">Activator</keyword>
<keyword id="KW-0025">Alternative splicing</keyword>
<keyword id="KW-0903">Direct protein sequencing</keyword>
<keyword id="KW-0235">DNA replication</keyword>
<keyword id="KW-0238">DNA-binding</keyword>
<keyword id="KW-0539">Nucleus</keyword>
<keyword id="KW-1185">Reference proteome</keyword>
<keyword id="KW-0804">Transcription</keyword>
<keyword id="KW-0805">Transcription regulation</keyword>
<comment type="function">
    <text>Recognizes and binds the palindromic sequence 5'-TTGGCNNNNNGCCAA-3' present in viral and cellular promoters and in the origin of replication of adenovirus type 2. These proteins are individually capable of activating transcription and replication.</text>
</comment>
<comment type="subunit">
    <text>Binds DNA as a homodimer.</text>
</comment>
<comment type="subcellular location">
    <subcellularLocation>
        <location>Nucleus</location>
    </subcellularLocation>
</comment>
<comment type="alternative products">
    <event type="alternative splicing"/>
    <isoform>
        <id>P17924-1</id>
        <name>1</name>
        <name>NFI-B1</name>
        <sequence type="displayed"/>
    </isoform>
    <isoform>
        <id>P17924-2</id>
        <name>2</name>
        <name>NFI-B2</name>
        <sequence type="described" ref="VSP_003550 VSP_003551"/>
    </isoform>
</comment>
<comment type="domain">
    <text evidence="1">The 9aaTAD motif is a transactivation domain present in a large number of yeast and animal transcription factors.</text>
</comment>
<comment type="similarity">
    <text evidence="2">Belongs to the CTF/NF-I family.</text>
</comment>
<evidence type="ECO:0000250" key="1">
    <source>
        <dbReference type="UniProtKB" id="O00712"/>
    </source>
</evidence>
<evidence type="ECO:0000255" key="2">
    <source>
        <dbReference type="PROSITE-ProRule" id="PRU00436"/>
    </source>
</evidence>
<evidence type="ECO:0000256" key="3">
    <source>
        <dbReference type="SAM" id="MobiDB-lite"/>
    </source>
</evidence>
<evidence type="ECO:0000303" key="4">
    <source>
    </source>
</evidence>
<reference key="1">
    <citation type="journal article" date="1990" name="Nucleic Acids Res.">
        <title>Chicken NFI/TGGCA proteins are encoded by at least three independent genes: NFI-A, NFI-B and NFI-C with homologues in mammalian genomes.</title>
        <authorList>
            <person name="Rupp R.A.W."/>
            <person name="Kruse U."/>
            <person name="Multhaup G."/>
            <person name="Goebel U."/>
            <person name="Beyreuther K."/>
            <person name="Sippel A.E."/>
        </authorList>
    </citation>
    <scope>NUCLEOTIDE SEQUENCE [MRNA] (ISOFORMS 1 AND 2)</scope>
    <scope>PARTIAL PROTEIN SEQUENCE</scope>
    <source>
        <tissue>Embryo</tissue>
    </source>
</reference>
<name>NFIB_CHICK</name>
<accession>P17924</accession>
<accession>P17925</accession>
<dbReference type="EMBL" id="X51485">
    <property type="protein sequence ID" value="CAA35852.1"/>
    <property type="molecule type" value="mRNA"/>
</dbReference>
<dbReference type="EMBL" id="X51484">
    <property type="protein sequence ID" value="CAA35851.1"/>
    <property type="molecule type" value="mRNA"/>
</dbReference>
<dbReference type="PIR" id="S09995">
    <property type="entry name" value="S09995"/>
</dbReference>
<dbReference type="RefSeq" id="NP_001383678.1">
    <molecule id="P17924-2"/>
    <property type="nucleotide sequence ID" value="NM_001396749.1"/>
</dbReference>
<dbReference type="RefSeq" id="NP_990603.1">
    <molecule id="P17924-1"/>
    <property type="nucleotide sequence ID" value="NM_205272.3"/>
</dbReference>
<dbReference type="RefSeq" id="XP_015135568.1">
    <property type="nucleotide sequence ID" value="XM_015280082.1"/>
</dbReference>
<dbReference type="SMR" id="P17924"/>
<dbReference type="FunCoup" id="P17924">
    <property type="interactions" value="300"/>
</dbReference>
<dbReference type="STRING" id="9031.ENSGALP00000044762"/>
<dbReference type="PaxDb" id="9031-ENSGALP00000008721"/>
<dbReference type="GeneID" id="396209"/>
<dbReference type="KEGG" id="gga:396209"/>
<dbReference type="CTD" id="4781"/>
<dbReference type="VEuPathDB" id="HostDB:geneid_396209"/>
<dbReference type="eggNOG" id="KOG3663">
    <property type="taxonomic scope" value="Eukaryota"/>
</dbReference>
<dbReference type="InParanoid" id="P17924"/>
<dbReference type="OrthoDB" id="10055441at2759"/>
<dbReference type="PhylomeDB" id="P17924"/>
<dbReference type="TreeFam" id="TF313889"/>
<dbReference type="PRO" id="PR:P17924"/>
<dbReference type="Proteomes" id="UP000000539">
    <property type="component" value="Chromosome Z"/>
</dbReference>
<dbReference type="Bgee" id="ENSGALG00000005441">
    <property type="expression patterns" value="Expressed in cerebellum and 11 other cell types or tissues"/>
</dbReference>
<dbReference type="GO" id="GO:0044300">
    <property type="term" value="C:cerebellar mossy fiber"/>
    <property type="evidence" value="ECO:0000250"/>
    <property type="project" value="UniProtKB"/>
</dbReference>
<dbReference type="GO" id="GO:0005634">
    <property type="term" value="C:nucleus"/>
    <property type="evidence" value="ECO:0000250"/>
    <property type="project" value="UniProtKB"/>
</dbReference>
<dbReference type="GO" id="GO:0003677">
    <property type="term" value="F:DNA binding"/>
    <property type="evidence" value="ECO:0000250"/>
    <property type="project" value="UniProtKB"/>
</dbReference>
<dbReference type="GO" id="GO:0000981">
    <property type="term" value="F:DNA-binding transcription factor activity, RNA polymerase II-specific"/>
    <property type="evidence" value="ECO:0000250"/>
    <property type="project" value="UniProtKB"/>
</dbReference>
<dbReference type="GO" id="GO:0000978">
    <property type="term" value="F:RNA polymerase II cis-regulatory region sequence-specific DNA binding"/>
    <property type="evidence" value="ECO:0000318"/>
    <property type="project" value="GO_Central"/>
</dbReference>
<dbReference type="GO" id="GO:0021960">
    <property type="term" value="P:anterior commissure morphogenesis"/>
    <property type="evidence" value="ECO:0000250"/>
    <property type="project" value="UniProtKB"/>
</dbReference>
<dbReference type="GO" id="GO:0002062">
    <property type="term" value="P:chondrocyte differentiation"/>
    <property type="evidence" value="ECO:0000250"/>
    <property type="project" value="UniProtKB"/>
</dbReference>
<dbReference type="GO" id="GO:0060486">
    <property type="term" value="P:club cell differentiation"/>
    <property type="evidence" value="ECO:0000250"/>
    <property type="project" value="UniProtKB"/>
</dbReference>
<dbReference type="GO" id="GO:0071679">
    <property type="term" value="P:commissural neuron axon guidance"/>
    <property type="evidence" value="ECO:0000250"/>
    <property type="project" value="UniProtKB"/>
</dbReference>
<dbReference type="GO" id="GO:0006260">
    <property type="term" value="P:DNA replication"/>
    <property type="evidence" value="ECO:0007669"/>
    <property type="project" value="UniProtKB-KW"/>
</dbReference>
<dbReference type="GO" id="GO:0010001">
    <property type="term" value="P:glial cell differentiation"/>
    <property type="evidence" value="ECO:0000250"/>
    <property type="project" value="UniProtKB"/>
</dbReference>
<dbReference type="GO" id="GO:0061141">
    <property type="term" value="P:lung ciliated cell differentiation"/>
    <property type="evidence" value="ECO:0000250"/>
    <property type="project" value="UniProtKB"/>
</dbReference>
<dbReference type="GO" id="GO:2000795">
    <property type="term" value="P:negative regulation of epithelial cell proliferation involved in lung morphogenesis"/>
    <property type="evidence" value="ECO:0000250"/>
    <property type="project" value="UniProtKB"/>
</dbReference>
<dbReference type="GO" id="GO:2000791">
    <property type="term" value="P:negative regulation of mesenchymal cell proliferation involved in lung development"/>
    <property type="evidence" value="ECO:0000250"/>
    <property type="project" value="UniProtKB"/>
</dbReference>
<dbReference type="GO" id="GO:0045944">
    <property type="term" value="P:positive regulation of transcription by RNA polymerase II"/>
    <property type="evidence" value="ECO:0000250"/>
    <property type="project" value="UniProtKB"/>
</dbReference>
<dbReference type="GO" id="GO:0021740">
    <property type="term" value="P:principal sensory nucleus of trigeminal nerve development"/>
    <property type="evidence" value="ECO:0000250"/>
    <property type="project" value="UniProtKB"/>
</dbReference>
<dbReference type="GO" id="GO:0006357">
    <property type="term" value="P:regulation of transcription by RNA polymerase II"/>
    <property type="evidence" value="ECO:0000318"/>
    <property type="project" value="GO_Central"/>
</dbReference>
<dbReference type="GO" id="GO:0060509">
    <property type="term" value="P:type I pneumocyte differentiation"/>
    <property type="evidence" value="ECO:0000250"/>
    <property type="project" value="UniProtKB"/>
</dbReference>
<dbReference type="GO" id="GO:0060510">
    <property type="term" value="P:type II pneumocyte differentiation"/>
    <property type="evidence" value="ECO:0000250"/>
    <property type="project" value="UniProtKB"/>
</dbReference>
<dbReference type="InterPro" id="IPR000647">
    <property type="entry name" value="CTF/NFI"/>
</dbReference>
<dbReference type="InterPro" id="IPR020604">
    <property type="entry name" value="CTF/NFI_DNA-bd-dom"/>
</dbReference>
<dbReference type="InterPro" id="IPR019739">
    <property type="entry name" value="CTF/NFI_DNA-bd_CS"/>
</dbReference>
<dbReference type="InterPro" id="IPR019548">
    <property type="entry name" value="CTF/NFI_DNA-bd_N"/>
</dbReference>
<dbReference type="InterPro" id="IPR003619">
    <property type="entry name" value="MAD_homology1_Dwarfin-type"/>
</dbReference>
<dbReference type="PANTHER" id="PTHR11492:SF4">
    <property type="entry name" value="NUCLEAR FACTOR 1 B-TYPE"/>
    <property type="match status" value="1"/>
</dbReference>
<dbReference type="PANTHER" id="PTHR11492">
    <property type="entry name" value="NUCLEAR FACTOR I"/>
    <property type="match status" value="1"/>
</dbReference>
<dbReference type="Pfam" id="PF00859">
    <property type="entry name" value="CTF_NFI"/>
    <property type="match status" value="1"/>
</dbReference>
<dbReference type="Pfam" id="PF03165">
    <property type="entry name" value="MH1"/>
    <property type="match status" value="1"/>
</dbReference>
<dbReference type="Pfam" id="PF10524">
    <property type="entry name" value="NfI_DNAbd_pre-N"/>
    <property type="match status" value="1"/>
</dbReference>
<dbReference type="SMART" id="SM00523">
    <property type="entry name" value="DWA"/>
    <property type="match status" value="1"/>
</dbReference>
<dbReference type="PROSITE" id="PS00349">
    <property type="entry name" value="CTF_NFI_1"/>
    <property type="match status" value="1"/>
</dbReference>
<dbReference type="PROSITE" id="PS51080">
    <property type="entry name" value="CTF_NFI_2"/>
    <property type="match status" value="1"/>
</dbReference>
<gene>
    <name type="primary">NFIB</name>
    <name type="synonym">NFI-B</name>
</gene>
<feature type="chain" id="PRO_0000100198" description="Nuclear factor 1 B-type">
    <location>
        <begin position="1"/>
        <end position="560"/>
    </location>
</feature>
<feature type="DNA-binding region" description="CTF/NF-I" evidence="2">
    <location>
        <begin position="1"/>
        <end position="195"/>
    </location>
</feature>
<feature type="region of interest" description="Disordered" evidence="3">
    <location>
        <begin position="257"/>
        <end position="369"/>
    </location>
</feature>
<feature type="region of interest" description="Disordered" evidence="3">
    <location>
        <begin position="384"/>
        <end position="445"/>
    </location>
</feature>
<feature type="short sequence motif" description="9aaTAD" evidence="1">
    <location>
        <begin position="396"/>
        <end position="404"/>
    </location>
</feature>
<feature type="compositionally biased region" description="Polar residues" evidence="3">
    <location>
        <begin position="324"/>
        <end position="339"/>
    </location>
</feature>
<feature type="compositionally biased region" description="Low complexity" evidence="3">
    <location>
        <begin position="407"/>
        <end position="420"/>
    </location>
</feature>
<feature type="splice variant" id="VSP_003550" description="In isoform 2." evidence="4">
    <original>PNSSG</original>
    <variation>SWYLG</variation>
    <location>
        <begin position="415"/>
        <end position="419"/>
    </location>
</feature>
<feature type="splice variant" id="VSP_003551" description="In isoform 2." evidence="4">
    <location>
        <begin position="420"/>
        <end position="560"/>
    </location>
</feature>
<proteinExistence type="evidence at protein level"/>
<sequence length="560" mass="62623">MMYSPICLTQDEFHPFIEALLPHVRAIAYTWFNLQARKRKYFKKHEKRMSKDEERAVKDELLSEKPEIKQKWASRLLAKLRKDIRQEFREDFVLTVTGKKHPCCVLSNPDQKGKIRRIDCLRQADKVWRLDLVMVILFKGIPLESTDGERLMKSPHCTNPALCVQPHHITVSVKELDLFLAYYVQEQDSGQPGSPSHNDPAKNPPVYLEDSFVKSGVFNVSELVRVSRTPITQGTGVNFPIGELPSQPYYHDMNSGINLQRSLSSPPSSKRPKTISIDENMEPSPTGDFYPSPNSPAAGSRTWHERDQDMSSPTMKKPEKPLFSPTSPQDSSPRLSTFPQHHHPGIPGVAQSVISTRTPPSPSPLPFPAQAILPPAPSSYFSHPTIRYPPHLNPQDTLKNYVPSYDPSSPQTSQPNSSGQVVGKVPGHFTPVLAPSPHHSAVRPVTLTMTDTKPITTSTEAYTASGTSQANRYVGLSPRDPSFLHQQQLRICDWTMNQNGRHLYPSASEDTLGITWQSPGTWASLVPFQVSNRTPILPTNVPNYGLNIIGEPFLQAESSN</sequence>